<proteinExistence type="evidence at protein level"/>
<name>RGI2_YEAST</name>
<accession>P40188</accession>
<accession>D6VVM5</accession>
<gene>
    <name type="primary">RGI2</name>
    <name type="ordered locus">YIL057C</name>
</gene>
<evidence type="ECO:0000269" key="1">
    <source>
    </source>
</evidence>
<evidence type="ECO:0000269" key="2">
    <source>
    </source>
</evidence>
<evidence type="ECO:0000269" key="3">
    <source>
    </source>
</evidence>
<evidence type="ECO:0000269" key="4">
    <source>
    </source>
</evidence>
<evidence type="ECO:0000269" key="5">
    <source>
    </source>
</evidence>
<evidence type="ECO:0000305" key="6"/>
<protein>
    <recommendedName>
        <fullName>Respiratory growth induced protein 2</fullName>
    </recommendedName>
</protein>
<keyword id="KW-0963">Cytoplasm</keyword>
<keyword id="KW-1185">Reference proteome</keyword>
<reference key="1">
    <citation type="journal article" date="1997" name="Nature">
        <title>The nucleotide sequence of Saccharomyces cerevisiae chromosome IX.</title>
        <authorList>
            <person name="Churcher C.M."/>
            <person name="Bowman S."/>
            <person name="Badcock K."/>
            <person name="Bankier A.T."/>
            <person name="Brown D."/>
            <person name="Chillingworth T."/>
            <person name="Connor R."/>
            <person name="Devlin K."/>
            <person name="Gentles S."/>
            <person name="Hamlin N."/>
            <person name="Harris D.E."/>
            <person name="Horsnell T."/>
            <person name="Hunt S."/>
            <person name="Jagels K."/>
            <person name="Jones M."/>
            <person name="Lye G."/>
            <person name="Moule S."/>
            <person name="Odell C."/>
            <person name="Pearson D."/>
            <person name="Rajandream M.A."/>
            <person name="Rice P."/>
            <person name="Rowley N."/>
            <person name="Skelton J."/>
            <person name="Smith V."/>
            <person name="Walsh S.V."/>
            <person name="Whitehead S."/>
            <person name="Barrell B.G."/>
        </authorList>
    </citation>
    <scope>NUCLEOTIDE SEQUENCE [LARGE SCALE GENOMIC DNA]</scope>
    <source>
        <strain>ATCC 204508 / S288c</strain>
    </source>
</reference>
<reference key="2">
    <citation type="journal article" date="2014" name="G3 (Bethesda)">
        <title>The reference genome sequence of Saccharomyces cerevisiae: Then and now.</title>
        <authorList>
            <person name="Engel S.R."/>
            <person name="Dietrich F.S."/>
            <person name="Fisk D.G."/>
            <person name="Binkley G."/>
            <person name="Balakrishnan R."/>
            <person name="Costanzo M.C."/>
            <person name="Dwight S.S."/>
            <person name="Hitz B.C."/>
            <person name="Karra K."/>
            <person name="Nash R.S."/>
            <person name="Weng S."/>
            <person name="Wong E.D."/>
            <person name="Lloyd P."/>
            <person name="Skrzypek M.S."/>
            <person name="Miyasato S.R."/>
            <person name="Simison M."/>
            <person name="Cherry J.M."/>
        </authorList>
    </citation>
    <scope>GENOME REANNOTATION</scope>
    <source>
        <strain>ATCC 204508 / S288c</strain>
    </source>
</reference>
<reference key="3">
    <citation type="journal article" date="2007" name="Genome Res.">
        <title>Approaching a complete repository of sequence-verified protein-encoding clones for Saccharomyces cerevisiae.</title>
        <authorList>
            <person name="Hu Y."/>
            <person name="Rolfs A."/>
            <person name="Bhullar B."/>
            <person name="Murthy T.V.S."/>
            <person name="Zhu C."/>
            <person name="Berger M.F."/>
            <person name="Camargo A.A."/>
            <person name="Kelley F."/>
            <person name="McCarron S."/>
            <person name="Jepson D."/>
            <person name="Richardson A."/>
            <person name="Raphael J."/>
            <person name="Moreira D."/>
            <person name="Taycher E."/>
            <person name="Zuo D."/>
            <person name="Mohr S."/>
            <person name="Kane M.F."/>
            <person name="Williamson J."/>
            <person name="Simpson A.J.G."/>
            <person name="Bulyk M.L."/>
            <person name="Harlow E."/>
            <person name="Marsischky G."/>
            <person name="Kolodner R.D."/>
            <person name="LaBaer J."/>
        </authorList>
    </citation>
    <scope>NUCLEOTIDE SEQUENCE [GENOMIC DNA]</scope>
    <source>
        <strain>ATCC 204508 / S288c</strain>
    </source>
</reference>
<reference key="4">
    <citation type="journal article" date="2003" name="J. Biol. Chem.">
        <title>The genome-wide transcriptional responses of Saccharomyces cerevisiae grown on glucose in aerobic chemostat cultures limited for carbon, nitrogen, phosphorus, or sulfur.</title>
        <authorList>
            <person name="Boer V.M."/>
            <person name="de Winde J.H."/>
            <person name="Pronk J.T."/>
            <person name="Piper M.D.W."/>
        </authorList>
    </citation>
    <scope>INDUCTION</scope>
</reference>
<reference key="5">
    <citation type="journal article" date="2003" name="Nature">
        <title>Global analysis of protein localization in budding yeast.</title>
        <authorList>
            <person name="Huh W.-K."/>
            <person name="Falvo J.V."/>
            <person name="Gerke L.C."/>
            <person name="Carroll A.S."/>
            <person name="Howson R.W."/>
            <person name="Weissman J.S."/>
            <person name="O'Shea E.K."/>
        </authorList>
    </citation>
    <scope>SUBCELLULAR LOCATION [LARGE SCALE ANALYSIS]</scope>
</reference>
<reference key="6">
    <citation type="journal article" date="2003" name="Nature">
        <title>Global analysis of protein expression in yeast.</title>
        <authorList>
            <person name="Ghaemmaghami S."/>
            <person name="Huh W.-K."/>
            <person name="Bower K."/>
            <person name="Howson R.W."/>
            <person name="Belle A."/>
            <person name="Dephoure N."/>
            <person name="O'Shea E.K."/>
            <person name="Weissman J.S."/>
        </authorList>
    </citation>
    <scope>LEVEL OF PROTEIN EXPRESSION [LARGE SCALE ANALYSIS]</scope>
</reference>
<reference key="7">
    <citation type="journal article" date="2006" name="Mol. Syst. Biol.">
        <title>When transcriptome meets metabolome: fast cellular responses of yeast to sudden relief of glucose limitation.</title>
        <authorList>
            <person name="Kresnowati M.T."/>
            <person name="van Winden W.A."/>
            <person name="Almering M.J."/>
            <person name="ten Pierick A."/>
            <person name="Ras C."/>
            <person name="Knijnenburg T.A."/>
            <person name="Daran-Lapujade P."/>
            <person name="Pronk J.T."/>
            <person name="Heijnen J.J."/>
            <person name="Daran J.M."/>
        </authorList>
    </citation>
    <scope>INDUCTION</scope>
</reference>
<reference key="8">
    <citation type="journal article" date="2010" name="PLoS ONE">
        <title>Structural and functional study of YER067W, a new protein involved in yeast metabolism control and drug resistance.</title>
        <authorList>
            <person name="Domitrovic T."/>
            <person name="Kozlov G."/>
            <person name="Freire J.C."/>
            <person name="Masuda C.A."/>
            <person name="da Silva Almeida M."/>
            <person name="Montero-Lomeli M."/>
            <person name="Atella G.C."/>
            <person name="Matta-Camacho E."/>
            <person name="Gehring K."/>
            <person name="Kurtenbach E."/>
        </authorList>
    </citation>
    <scope>FUNCTION</scope>
</reference>
<comment type="function">
    <text evidence="5">Involved in the control of energetic metabolism and significantly contribute to cell fitness, especially under respiratory growth conditions.</text>
</comment>
<comment type="subcellular location">
    <subcellularLocation>
        <location evidence="2">Cytoplasm</location>
    </subcellularLocation>
</comment>
<comment type="induction">
    <text evidence="1 4">Up-regulated under carbon limitation and repressed under high glucose.</text>
</comment>
<comment type="miscellaneous">
    <text evidence="3">Present with 5530 molecules/cell in log phase SD medium.</text>
</comment>
<comment type="similarity">
    <text evidence="6">Belongs to the RGI1 family.</text>
</comment>
<organism>
    <name type="scientific">Saccharomyces cerevisiae (strain ATCC 204508 / S288c)</name>
    <name type="common">Baker's yeast</name>
    <dbReference type="NCBI Taxonomy" id="559292"/>
    <lineage>
        <taxon>Eukaryota</taxon>
        <taxon>Fungi</taxon>
        <taxon>Dikarya</taxon>
        <taxon>Ascomycota</taxon>
        <taxon>Saccharomycotina</taxon>
        <taxon>Saccharomycetes</taxon>
        <taxon>Saccharomycetales</taxon>
        <taxon>Saccharomycetaceae</taxon>
        <taxon>Saccharomyces</taxon>
    </lineage>
</organism>
<sequence>MTKKDKKAKGPKMSTITTKSGESLKVFEDLHDFETYLKGETEDQEFDHVHCQLKYYPPFVLHDAHDDPEKIKETANSHSKKFVRHLHQHVEKHLLKDIKTAINKPELKFHDKKKQESFDRIVWNYGEETELNAKKFKVSVEVVCKHDGAMVDVDYKTEPLQPLI</sequence>
<dbReference type="EMBL" id="Z38060">
    <property type="protein sequence ID" value="CAA86166.1"/>
    <property type="molecule type" value="Genomic_DNA"/>
</dbReference>
<dbReference type="EMBL" id="AY558086">
    <property type="protein sequence ID" value="AAS56412.1"/>
    <property type="molecule type" value="Genomic_DNA"/>
</dbReference>
<dbReference type="EMBL" id="BK006942">
    <property type="protein sequence ID" value="DAA08491.1"/>
    <property type="molecule type" value="Genomic_DNA"/>
</dbReference>
<dbReference type="PIR" id="S48422">
    <property type="entry name" value="S48422"/>
</dbReference>
<dbReference type="RefSeq" id="NP_012207.3">
    <property type="nucleotide sequence ID" value="NM_001179407.3"/>
</dbReference>
<dbReference type="SMR" id="P40188"/>
<dbReference type="BioGRID" id="34933">
    <property type="interactions" value="79"/>
</dbReference>
<dbReference type="DIP" id="DIP-5500N"/>
<dbReference type="FunCoup" id="P40188">
    <property type="interactions" value="100"/>
</dbReference>
<dbReference type="IntAct" id="P40188">
    <property type="interactions" value="3"/>
</dbReference>
<dbReference type="STRING" id="4932.YIL057C"/>
<dbReference type="CarbonylDB" id="P40188"/>
<dbReference type="iPTMnet" id="P40188"/>
<dbReference type="PaxDb" id="4932-YIL057C"/>
<dbReference type="PeptideAtlas" id="P40188"/>
<dbReference type="EnsemblFungi" id="YIL057C_mRNA">
    <property type="protein sequence ID" value="YIL057C"/>
    <property type="gene ID" value="YIL057C"/>
</dbReference>
<dbReference type="GeneID" id="854753"/>
<dbReference type="KEGG" id="sce:YIL057C"/>
<dbReference type="AGR" id="SGD:S000001319"/>
<dbReference type="SGD" id="S000001319">
    <property type="gene designation" value="RGI2"/>
</dbReference>
<dbReference type="VEuPathDB" id="FungiDB:YIL057C"/>
<dbReference type="eggNOG" id="ENOG502RZ9F">
    <property type="taxonomic scope" value="Eukaryota"/>
</dbReference>
<dbReference type="GeneTree" id="ENSGT00940000176408"/>
<dbReference type="HOGENOM" id="CLU_118207_0_0_1"/>
<dbReference type="InParanoid" id="P40188"/>
<dbReference type="OMA" id="HLKYYPP"/>
<dbReference type="OrthoDB" id="4082176at2759"/>
<dbReference type="BioCyc" id="YEAST:G3O-31327-MONOMER"/>
<dbReference type="BioGRID-ORCS" id="854753">
    <property type="hits" value="1 hit in 10 CRISPR screens"/>
</dbReference>
<dbReference type="PRO" id="PR:P40188"/>
<dbReference type="Proteomes" id="UP000002311">
    <property type="component" value="Chromosome IX"/>
</dbReference>
<dbReference type="RNAct" id="P40188">
    <property type="molecule type" value="protein"/>
</dbReference>
<dbReference type="GO" id="GO:0005737">
    <property type="term" value="C:cytoplasm"/>
    <property type="evidence" value="ECO:0007005"/>
    <property type="project" value="SGD"/>
</dbReference>
<dbReference type="GO" id="GO:0006112">
    <property type="term" value="P:energy reserve metabolic process"/>
    <property type="evidence" value="ECO:0000315"/>
    <property type="project" value="SGD"/>
</dbReference>
<dbReference type="FunFam" id="3.40.1000.40:FF:000001">
    <property type="entry name" value="Respiratory growth induced protein 2"/>
    <property type="match status" value="1"/>
</dbReference>
<dbReference type="Gene3D" id="3.40.1000.40">
    <property type="entry name" value="Respiratory growth induced protein 1"/>
    <property type="match status" value="1"/>
</dbReference>
<dbReference type="InterPro" id="IPR022554">
    <property type="entry name" value="RGI1"/>
</dbReference>
<dbReference type="InterPro" id="IPR038235">
    <property type="entry name" value="RGI1_sf"/>
</dbReference>
<dbReference type="Pfam" id="PF10843">
    <property type="entry name" value="RGI1"/>
    <property type="match status" value="1"/>
</dbReference>
<feature type="chain" id="PRO_0000202987" description="Respiratory growth induced protein 2">
    <location>
        <begin position="1"/>
        <end position="164"/>
    </location>
</feature>